<comment type="subcellular location">
    <subcellularLocation>
        <location evidence="3">Membrane</location>
        <topology evidence="3">Single-pass type I membrane protein</topology>
    </subcellularLocation>
</comment>
<gene>
    <name type="primary">igsf3</name>
</gene>
<organism>
    <name type="scientific">Xenopus laevis</name>
    <name type="common">African clawed frog</name>
    <dbReference type="NCBI Taxonomy" id="8355"/>
    <lineage>
        <taxon>Eukaryota</taxon>
        <taxon>Metazoa</taxon>
        <taxon>Chordata</taxon>
        <taxon>Craniata</taxon>
        <taxon>Vertebrata</taxon>
        <taxon>Euteleostomi</taxon>
        <taxon>Amphibia</taxon>
        <taxon>Batrachia</taxon>
        <taxon>Anura</taxon>
        <taxon>Pipoidea</taxon>
        <taxon>Pipidae</taxon>
        <taxon>Xenopodinae</taxon>
        <taxon>Xenopus</taxon>
        <taxon>Xenopus</taxon>
    </lineage>
</organism>
<keyword id="KW-1015">Disulfide bond</keyword>
<keyword id="KW-0393">Immunoglobulin domain</keyword>
<keyword id="KW-0472">Membrane</keyword>
<keyword id="KW-1185">Reference proteome</keyword>
<keyword id="KW-0677">Repeat</keyword>
<keyword id="KW-0732">Signal</keyword>
<keyword id="KW-0812">Transmembrane</keyword>
<keyword id="KW-1133">Transmembrane helix</keyword>
<name>IGSF3_XENLA</name>
<reference key="1">
    <citation type="submission" date="2004-10" db="EMBL/GenBank/DDBJ databases">
        <authorList>
            <consortium name="NIH - Xenopus Gene Collection (XGC) project"/>
        </authorList>
    </citation>
    <scope>NUCLEOTIDE SEQUENCE [LARGE SCALE MRNA]</scope>
    <source>
        <tissue>Embryo</tissue>
    </source>
</reference>
<sequence length="1165" mass="129559">MGTAAGLLLAALLLAGTSWAQREVNIQQGPLYRAEGSQISIWCNVRGYQGPSEQNFLWSIYLPSAPEKEIQMVGTSDPSFSYAIYSQRVRSGDIYVERVSGDHALLHIRQLQEQDAGEYECHTPNTDPTYHGSYSAKMNLHVIPDTLTVSSPAQTLQKVEGGSLQVTCEVSQNSSQHTHLSVSWLRISGGEEHEIISLTQNLSVRAGPTYAQKHSVGDVRMDKLGDSTFRLTLYNLHPSDQGEIHCVGTEWIQDPDGTWFPLTQKRSEGTSVTVQPTDKEFNVRLETERRTYGAGDMASLRCIIDAQNPAERLFAVSWAFNSSLIASQSPGGVPSLTGEYAKREDRGEVRVGKDSDIVFSLKIFHLRPEDSGKYNCRVTERERGPSGELIDRESKRPKNIPISVLPLRTSLTVTVTANSSSVLEGVRLSLTCSVASLAGPQSRISASWHLQDKQGRQREVVRQDRDGVTWAGEQYRERLGTGELRLIRSGSDTFSLELEGSQRTDTGSYECRVAEWVPATDGEWQLLGERSAQANVDIMALETGFAVTAITRTPGVSYFDSFDLQCILKPHYPPWVGVSVTWRFQPAGGGDTHDLVTFSRAGGVQWGERAGSFRGRSVVEKGDSTHTVKLSVSRASDSEAGKYQCVAELWRWEYRGTWTQLAERASNLLEIRVQRPVPRLQVSKVTRTLSVVEGSQVTLSCSIRSQTGPDSRFAVLWFMRQPSGADGKLIVRSNTGMEYGTYAEEASLKGRLQLEVTAPGHYTLTLQGAHADDSGSYYCQVEEWAMDPNQAWYRLAEEASGMTEIRVRVPDANLQLDQIPRNVSALEGQSFTVTCHVLNRTLPDSRLSLEWLSWWAGHMERRALVRLTVDGVTILGSVEEENVAPGLPSRMQVSQPSLGLYALTLRGTEVQDTGTYSCLVQEWLQDPRGQWYKRTEERSGATYVSVRQPDPALQLDSSLLNVSLMEGGHFDLDCVVSSRSRPDSQLAISWSLQGASRGAEQETLLNVDRSGVWAPMAPRWEGRLQQLQLSPTLFRLHVPRVGQGDSGNYTCLVQEWLQGPRGNWYLLAQDESLIGWIRVQSKESNLQSTICANDALFYLVFFYPFPIFGILIITILLVRFRHRPTSKPGEGKNGVPLLWIKEPHLNYSPTCLEPPVLSIHPGTID</sequence>
<protein>
    <recommendedName>
        <fullName>Immunoglobulin superfamily member 3</fullName>
        <shortName>IgSF3</shortName>
    </recommendedName>
</protein>
<proteinExistence type="evidence at transcript level"/>
<feature type="signal peptide" evidence="1">
    <location>
        <begin position="1"/>
        <end position="20"/>
    </location>
</feature>
<feature type="chain" id="PRO_0000320136" description="Immunoglobulin superfamily member 3">
    <location>
        <begin position="21"/>
        <end position="1165"/>
    </location>
</feature>
<feature type="topological domain" description="Extracellular" evidence="1">
    <location>
        <begin position="21"/>
        <end position="1095"/>
    </location>
</feature>
<feature type="transmembrane region" description="Helical" evidence="1">
    <location>
        <begin position="1096"/>
        <end position="1116"/>
    </location>
</feature>
<feature type="topological domain" description="Cytoplasmic" evidence="1">
    <location>
        <begin position="1117"/>
        <end position="1165"/>
    </location>
</feature>
<feature type="domain" description="Ig-like C2-type 1">
    <location>
        <begin position="22"/>
        <end position="139"/>
    </location>
</feature>
<feature type="domain" description="Ig-like C2-type 2">
    <location>
        <begin position="144"/>
        <end position="262"/>
    </location>
</feature>
<feature type="domain" description="Ig-like C2-type 3">
    <location>
        <begin position="276"/>
        <end position="386"/>
    </location>
</feature>
<feature type="domain" description="Ig-like C2-type 4">
    <location>
        <begin position="406"/>
        <end position="527"/>
    </location>
</feature>
<feature type="domain" description="Ig-like C2-type 5">
    <location>
        <begin position="545"/>
        <end position="661"/>
    </location>
</feature>
<feature type="domain" description="Ig-like C2-type 6">
    <location>
        <begin position="678"/>
        <end position="800"/>
    </location>
</feature>
<feature type="domain" description="Ig-like C2-type 7">
    <location>
        <begin position="810"/>
        <end position="934"/>
    </location>
</feature>
<feature type="domain" description="Ig-like C2-type 8">
    <location>
        <begin position="951"/>
        <end position="1067"/>
    </location>
</feature>
<feature type="short sequence motif" description="EWI motif">
    <location>
        <begin position="250"/>
        <end position="252"/>
    </location>
</feature>
<feature type="disulfide bond" evidence="2">
    <location>
        <begin position="43"/>
        <end position="121"/>
    </location>
</feature>
<feature type="disulfide bond" evidence="2">
    <location>
        <begin position="168"/>
        <end position="246"/>
    </location>
</feature>
<feature type="disulfide bond" evidence="2">
    <location>
        <begin position="302"/>
        <end position="376"/>
    </location>
</feature>
<feature type="disulfide bond" evidence="2">
    <location>
        <begin position="432"/>
        <end position="511"/>
    </location>
</feature>
<feature type="disulfide bond" evidence="2">
    <location>
        <begin position="566"/>
        <end position="645"/>
    </location>
</feature>
<feature type="disulfide bond" evidence="2">
    <location>
        <begin position="701"/>
        <end position="779"/>
    </location>
</feature>
<feature type="disulfide bond" evidence="2">
    <location>
        <begin position="835"/>
        <end position="918"/>
    </location>
</feature>
<feature type="disulfide bond" evidence="2">
    <location>
        <begin position="974"/>
        <end position="1051"/>
    </location>
</feature>
<evidence type="ECO:0000255" key="1"/>
<evidence type="ECO:0000255" key="2">
    <source>
        <dbReference type="PROSITE-ProRule" id="PRU00114"/>
    </source>
</evidence>
<evidence type="ECO:0000305" key="3"/>
<dbReference type="EMBL" id="BC084781">
    <property type="protein sequence ID" value="AAH84781.1"/>
    <property type="molecule type" value="mRNA"/>
</dbReference>
<dbReference type="RefSeq" id="NP_001088456.1">
    <property type="nucleotide sequence ID" value="NM_001094987.1"/>
</dbReference>
<dbReference type="RefSeq" id="XP_018103911.1">
    <property type="nucleotide sequence ID" value="XM_018248422.1"/>
</dbReference>
<dbReference type="GeneID" id="495320"/>
<dbReference type="KEGG" id="xla:495320"/>
<dbReference type="AGR" id="Xenbase:XB-GENE-6253974"/>
<dbReference type="CTD" id="495320"/>
<dbReference type="Xenbase" id="XB-GENE-6253974">
    <property type="gene designation" value="igsf3.S"/>
</dbReference>
<dbReference type="OMA" id="PVSVVWQ"/>
<dbReference type="OrthoDB" id="9890427at2759"/>
<dbReference type="Proteomes" id="UP000186698">
    <property type="component" value="Chromosome 2S"/>
</dbReference>
<dbReference type="Bgee" id="495320">
    <property type="expression patterns" value="Expressed in internal ear and 19 other cell types or tissues"/>
</dbReference>
<dbReference type="GO" id="GO:0016020">
    <property type="term" value="C:membrane"/>
    <property type="evidence" value="ECO:0000318"/>
    <property type="project" value="GO_Central"/>
</dbReference>
<dbReference type="CDD" id="cd00099">
    <property type="entry name" value="IgV"/>
    <property type="match status" value="2"/>
</dbReference>
<dbReference type="FunFam" id="2.60.40.10:FF:003318">
    <property type="match status" value="1"/>
</dbReference>
<dbReference type="FunFam" id="2.60.40.10:FF:000191">
    <property type="entry name" value="Immunoglobulin superfamily member 3"/>
    <property type="match status" value="1"/>
</dbReference>
<dbReference type="FunFam" id="2.60.40.10:FF:000689">
    <property type="entry name" value="Immunoglobulin superfamily member 3"/>
    <property type="match status" value="1"/>
</dbReference>
<dbReference type="FunFam" id="2.60.40.10:FF:003319">
    <property type="entry name" value="Immunoglobulin superfamily member 3"/>
    <property type="match status" value="1"/>
</dbReference>
<dbReference type="FunFam" id="2.60.40.10:FF:000604">
    <property type="entry name" value="immunoglobulin superfamily member 3"/>
    <property type="match status" value="1"/>
</dbReference>
<dbReference type="FunFam" id="2.60.40.10:FF:000491">
    <property type="entry name" value="Immunoglobulin superfamily, member 3"/>
    <property type="match status" value="2"/>
</dbReference>
<dbReference type="Gene3D" id="2.60.40.10">
    <property type="entry name" value="Immunoglobulins"/>
    <property type="match status" value="8"/>
</dbReference>
<dbReference type="InterPro" id="IPR007110">
    <property type="entry name" value="Ig-like_dom"/>
</dbReference>
<dbReference type="InterPro" id="IPR036179">
    <property type="entry name" value="Ig-like_dom_sf"/>
</dbReference>
<dbReference type="InterPro" id="IPR013783">
    <property type="entry name" value="Ig-like_fold"/>
</dbReference>
<dbReference type="InterPro" id="IPR003599">
    <property type="entry name" value="Ig_sub"/>
</dbReference>
<dbReference type="InterPro" id="IPR013106">
    <property type="entry name" value="Ig_V-set"/>
</dbReference>
<dbReference type="InterPro" id="IPR051102">
    <property type="entry name" value="IgSF_V-set/TM_domain"/>
</dbReference>
<dbReference type="PANTHER" id="PTHR12207">
    <property type="entry name" value="V-SET AND TRANSMEMBRANE DOMAIN-CONTAINING PROTEIN"/>
    <property type="match status" value="1"/>
</dbReference>
<dbReference type="Pfam" id="PF07686">
    <property type="entry name" value="V-set"/>
    <property type="match status" value="3"/>
</dbReference>
<dbReference type="SMART" id="SM00409">
    <property type="entry name" value="IG"/>
    <property type="match status" value="8"/>
</dbReference>
<dbReference type="SMART" id="SM00406">
    <property type="entry name" value="IGv"/>
    <property type="match status" value="5"/>
</dbReference>
<dbReference type="SUPFAM" id="SSF48726">
    <property type="entry name" value="Immunoglobulin"/>
    <property type="match status" value="8"/>
</dbReference>
<dbReference type="PROSITE" id="PS50835">
    <property type="entry name" value="IG_LIKE"/>
    <property type="match status" value="7"/>
</dbReference>
<accession>Q5U5A3</accession>